<comment type="function">
    <text evidence="1">F(1)F(0) ATP synthase produces ATP from ADP in the presence of a proton or sodium gradient. F-type ATPases consist of two structural domains, F(1) containing the extramembraneous catalytic core and F(0) containing the membrane proton channel, linked together by a central stalk and a peripheral stalk. During catalysis, ATP synthesis in the catalytic domain of F(1) is coupled via a rotary mechanism of the central stalk subunits to proton translocation.</text>
</comment>
<comment type="function">
    <text evidence="1">Key component of the F(0) channel; it plays a direct role in translocation across the membrane. A homomeric c-ring of between 10-14 subunits forms the central stalk rotor element with the F(1) delta and epsilon subunits.</text>
</comment>
<comment type="subunit">
    <text evidence="1">F-type ATPases have 2 components, F(1) - the catalytic core - and F(0) - the membrane proton channel. F(1) has five subunits: alpha(3), beta(3), gamma(1), delta(1), epsilon(1). F(0) has three main subunits: a(1), b(2) and c(10-14). The alpha and beta chains form an alternating ring which encloses part of the gamma chain. F(1) is attached to F(0) by a central stalk formed by the gamma and epsilon chains, while a peripheral stalk is formed by the delta and b chains.</text>
</comment>
<comment type="subcellular location">
    <subcellularLocation>
        <location evidence="1">Cell inner membrane</location>
        <topology evidence="1">Multi-pass membrane protein</topology>
    </subcellularLocation>
</comment>
<comment type="similarity">
    <text evidence="1">Belongs to the ATPase C chain family.</text>
</comment>
<protein>
    <recommendedName>
        <fullName evidence="1">ATP synthase subunit c</fullName>
    </recommendedName>
    <alternativeName>
        <fullName evidence="1">ATP synthase F(0) sector subunit c</fullName>
    </alternativeName>
    <alternativeName>
        <fullName evidence="1">F-type ATPase subunit c</fullName>
        <shortName evidence="1">F-ATPase subunit c</shortName>
    </alternativeName>
    <alternativeName>
        <fullName evidence="1">Lipid-binding protein</fullName>
    </alternativeName>
</protein>
<reference key="1">
    <citation type="journal article" date="2008" name="PLoS Genet.">
        <title>Complete genome sequence of the N2-fixing broad host range endophyte Klebsiella pneumoniae 342 and virulence predictions verified in mice.</title>
        <authorList>
            <person name="Fouts D.E."/>
            <person name="Tyler H.L."/>
            <person name="DeBoy R.T."/>
            <person name="Daugherty S."/>
            <person name="Ren Q."/>
            <person name="Badger J.H."/>
            <person name="Durkin A.S."/>
            <person name="Huot H."/>
            <person name="Shrivastava S."/>
            <person name="Kothari S."/>
            <person name="Dodson R.J."/>
            <person name="Mohamoud Y."/>
            <person name="Khouri H."/>
            <person name="Roesch L.F.W."/>
            <person name="Krogfelt K.A."/>
            <person name="Struve C."/>
            <person name="Triplett E.W."/>
            <person name="Methe B.A."/>
        </authorList>
    </citation>
    <scope>NUCLEOTIDE SEQUENCE [LARGE SCALE GENOMIC DNA]</scope>
    <source>
        <strain>342</strain>
    </source>
</reference>
<feature type="chain" id="PRO_1000184399" description="ATP synthase subunit c">
    <location>
        <begin position="1"/>
        <end position="79"/>
    </location>
</feature>
<feature type="transmembrane region" description="Helical" evidence="1">
    <location>
        <begin position="11"/>
        <end position="31"/>
    </location>
</feature>
<feature type="transmembrane region" description="Helical" evidence="1">
    <location>
        <begin position="53"/>
        <end position="73"/>
    </location>
</feature>
<feature type="site" description="Reversibly protonated during proton transport" evidence="1">
    <location>
        <position position="61"/>
    </location>
</feature>
<name>ATPL_KLEP3</name>
<evidence type="ECO:0000255" key="1">
    <source>
        <dbReference type="HAMAP-Rule" id="MF_01396"/>
    </source>
</evidence>
<accession>B5XZL9</accession>
<sequence>MENLNMDLLYMAAAVMMGLAAIGAAIGIGILGGKFLEGAARQPDLIPLLRTQFFIVMGLVDAIPMIAVGLGLYVMFAVA</sequence>
<keyword id="KW-0066">ATP synthesis</keyword>
<keyword id="KW-0997">Cell inner membrane</keyword>
<keyword id="KW-1003">Cell membrane</keyword>
<keyword id="KW-0138">CF(0)</keyword>
<keyword id="KW-0375">Hydrogen ion transport</keyword>
<keyword id="KW-0406">Ion transport</keyword>
<keyword id="KW-0446">Lipid-binding</keyword>
<keyword id="KW-0472">Membrane</keyword>
<keyword id="KW-0812">Transmembrane</keyword>
<keyword id="KW-1133">Transmembrane helix</keyword>
<keyword id="KW-0813">Transport</keyword>
<gene>
    <name evidence="1" type="primary">atpE</name>
    <name type="ordered locus">KPK_5539</name>
</gene>
<proteinExistence type="inferred from homology"/>
<dbReference type="EMBL" id="CP000964">
    <property type="protein sequence ID" value="ACI07743.1"/>
    <property type="molecule type" value="Genomic_DNA"/>
</dbReference>
<dbReference type="SMR" id="B5XZL9"/>
<dbReference type="KEGG" id="kpe:KPK_5539"/>
<dbReference type="HOGENOM" id="CLU_148047_1_0_6"/>
<dbReference type="Proteomes" id="UP000001734">
    <property type="component" value="Chromosome"/>
</dbReference>
<dbReference type="GO" id="GO:0005886">
    <property type="term" value="C:plasma membrane"/>
    <property type="evidence" value="ECO:0007669"/>
    <property type="project" value="UniProtKB-SubCell"/>
</dbReference>
<dbReference type="GO" id="GO:0045259">
    <property type="term" value="C:proton-transporting ATP synthase complex"/>
    <property type="evidence" value="ECO:0007669"/>
    <property type="project" value="UniProtKB-KW"/>
</dbReference>
<dbReference type="GO" id="GO:0033177">
    <property type="term" value="C:proton-transporting two-sector ATPase complex, proton-transporting domain"/>
    <property type="evidence" value="ECO:0007669"/>
    <property type="project" value="InterPro"/>
</dbReference>
<dbReference type="GO" id="GO:0008289">
    <property type="term" value="F:lipid binding"/>
    <property type="evidence" value="ECO:0007669"/>
    <property type="project" value="UniProtKB-KW"/>
</dbReference>
<dbReference type="GO" id="GO:0046933">
    <property type="term" value="F:proton-transporting ATP synthase activity, rotational mechanism"/>
    <property type="evidence" value="ECO:0007669"/>
    <property type="project" value="UniProtKB-UniRule"/>
</dbReference>
<dbReference type="CDD" id="cd18185">
    <property type="entry name" value="ATP-synt_Fo_c_ATPE"/>
    <property type="match status" value="1"/>
</dbReference>
<dbReference type="FunFam" id="1.20.20.10:FF:000002">
    <property type="entry name" value="ATP synthase subunit c"/>
    <property type="match status" value="1"/>
</dbReference>
<dbReference type="Gene3D" id="1.20.20.10">
    <property type="entry name" value="F1F0 ATP synthase subunit C"/>
    <property type="match status" value="1"/>
</dbReference>
<dbReference type="HAMAP" id="MF_01396">
    <property type="entry name" value="ATP_synth_c_bact"/>
    <property type="match status" value="1"/>
</dbReference>
<dbReference type="InterPro" id="IPR005953">
    <property type="entry name" value="ATP_synth_csu_bac/chlpt"/>
</dbReference>
<dbReference type="InterPro" id="IPR000454">
    <property type="entry name" value="ATP_synth_F0_csu"/>
</dbReference>
<dbReference type="InterPro" id="IPR020537">
    <property type="entry name" value="ATP_synth_F0_csu_DDCD_BS"/>
</dbReference>
<dbReference type="InterPro" id="IPR038662">
    <property type="entry name" value="ATP_synth_F0_csu_sf"/>
</dbReference>
<dbReference type="InterPro" id="IPR002379">
    <property type="entry name" value="ATPase_proteolipid_c-like_dom"/>
</dbReference>
<dbReference type="InterPro" id="IPR035921">
    <property type="entry name" value="F/V-ATP_Csub_sf"/>
</dbReference>
<dbReference type="NCBIfam" id="TIGR01260">
    <property type="entry name" value="ATP_synt_c"/>
    <property type="match status" value="1"/>
</dbReference>
<dbReference type="NCBIfam" id="NF005363">
    <property type="entry name" value="PRK06876.1"/>
    <property type="match status" value="1"/>
</dbReference>
<dbReference type="Pfam" id="PF00137">
    <property type="entry name" value="ATP-synt_C"/>
    <property type="match status" value="1"/>
</dbReference>
<dbReference type="PRINTS" id="PR00124">
    <property type="entry name" value="ATPASEC"/>
</dbReference>
<dbReference type="SUPFAM" id="SSF81333">
    <property type="entry name" value="F1F0 ATP synthase subunit C"/>
    <property type="match status" value="1"/>
</dbReference>
<dbReference type="PROSITE" id="PS00605">
    <property type="entry name" value="ATPASE_C"/>
    <property type="match status" value="1"/>
</dbReference>
<organism>
    <name type="scientific">Klebsiella pneumoniae (strain 342)</name>
    <dbReference type="NCBI Taxonomy" id="507522"/>
    <lineage>
        <taxon>Bacteria</taxon>
        <taxon>Pseudomonadati</taxon>
        <taxon>Pseudomonadota</taxon>
        <taxon>Gammaproteobacteria</taxon>
        <taxon>Enterobacterales</taxon>
        <taxon>Enterobacteriaceae</taxon>
        <taxon>Klebsiella/Raoultella group</taxon>
        <taxon>Klebsiella</taxon>
        <taxon>Klebsiella pneumoniae complex</taxon>
    </lineage>
</organism>